<comment type="function">
    <text evidence="1">Catalyzes the ferrous insertion into protoporphyrin IX.</text>
</comment>
<comment type="catalytic activity">
    <reaction evidence="1">
        <text>heme b + 2 H(+) = protoporphyrin IX + Fe(2+)</text>
        <dbReference type="Rhea" id="RHEA:22584"/>
        <dbReference type="ChEBI" id="CHEBI:15378"/>
        <dbReference type="ChEBI" id="CHEBI:29033"/>
        <dbReference type="ChEBI" id="CHEBI:57306"/>
        <dbReference type="ChEBI" id="CHEBI:60344"/>
        <dbReference type="EC" id="4.98.1.1"/>
    </reaction>
</comment>
<comment type="pathway">
    <text evidence="1">Porphyrin-containing compound metabolism; protoheme biosynthesis; protoheme from protoporphyrin-IX: step 1/1.</text>
</comment>
<comment type="subcellular location">
    <subcellularLocation>
        <location evidence="1">Cytoplasm</location>
    </subcellularLocation>
</comment>
<comment type="similarity">
    <text evidence="1">Belongs to the ferrochelatase family.</text>
</comment>
<feature type="chain" id="PRO_1000019316" description="Ferrochelatase">
    <location>
        <begin position="1"/>
        <end position="366"/>
    </location>
</feature>
<feature type="binding site" evidence="1">
    <location>
        <position position="210"/>
    </location>
    <ligand>
        <name>Fe cation</name>
        <dbReference type="ChEBI" id="CHEBI:24875"/>
    </ligand>
</feature>
<feature type="binding site" evidence="1">
    <location>
        <position position="293"/>
    </location>
    <ligand>
        <name>Fe cation</name>
        <dbReference type="ChEBI" id="CHEBI:24875"/>
    </ligand>
</feature>
<evidence type="ECO:0000255" key="1">
    <source>
        <dbReference type="HAMAP-Rule" id="MF_00323"/>
    </source>
</evidence>
<dbReference type="EC" id="4.98.1.1" evidence="1"/>
<dbReference type="EMBL" id="CP000349">
    <property type="protein sequence ID" value="ABJ80361.1"/>
    <property type="molecule type" value="Genomic_DNA"/>
</dbReference>
<dbReference type="SMR" id="Q04X34"/>
<dbReference type="KEGG" id="lbl:LBL_4018"/>
<dbReference type="HOGENOM" id="CLU_018884_4_1_12"/>
<dbReference type="UniPathway" id="UPA00252">
    <property type="reaction ID" value="UER00325"/>
</dbReference>
<dbReference type="GO" id="GO:0005737">
    <property type="term" value="C:cytoplasm"/>
    <property type="evidence" value="ECO:0007669"/>
    <property type="project" value="UniProtKB-SubCell"/>
</dbReference>
<dbReference type="GO" id="GO:0004325">
    <property type="term" value="F:ferrochelatase activity"/>
    <property type="evidence" value="ECO:0007669"/>
    <property type="project" value="UniProtKB-UniRule"/>
</dbReference>
<dbReference type="GO" id="GO:0046872">
    <property type="term" value="F:metal ion binding"/>
    <property type="evidence" value="ECO:0007669"/>
    <property type="project" value="UniProtKB-KW"/>
</dbReference>
<dbReference type="GO" id="GO:0006783">
    <property type="term" value="P:heme biosynthetic process"/>
    <property type="evidence" value="ECO:0007669"/>
    <property type="project" value="UniProtKB-UniRule"/>
</dbReference>
<dbReference type="CDD" id="cd00419">
    <property type="entry name" value="Ferrochelatase_C"/>
    <property type="match status" value="1"/>
</dbReference>
<dbReference type="CDD" id="cd03411">
    <property type="entry name" value="Ferrochelatase_N"/>
    <property type="match status" value="1"/>
</dbReference>
<dbReference type="Gene3D" id="3.40.50.1400">
    <property type="match status" value="2"/>
</dbReference>
<dbReference type="HAMAP" id="MF_00323">
    <property type="entry name" value="Ferrochelatase"/>
    <property type="match status" value="1"/>
</dbReference>
<dbReference type="InterPro" id="IPR001015">
    <property type="entry name" value="Ferrochelatase"/>
</dbReference>
<dbReference type="InterPro" id="IPR019772">
    <property type="entry name" value="Ferrochelatase_AS"/>
</dbReference>
<dbReference type="InterPro" id="IPR033644">
    <property type="entry name" value="Ferrochelatase_C"/>
</dbReference>
<dbReference type="InterPro" id="IPR033659">
    <property type="entry name" value="Ferrochelatase_N"/>
</dbReference>
<dbReference type="NCBIfam" id="TIGR00109">
    <property type="entry name" value="hemH"/>
    <property type="match status" value="1"/>
</dbReference>
<dbReference type="PANTHER" id="PTHR11108">
    <property type="entry name" value="FERROCHELATASE"/>
    <property type="match status" value="1"/>
</dbReference>
<dbReference type="PANTHER" id="PTHR11108:SF1">
    <property type="entry name" value="FERROCHELATASE, MITOCHONDRIAL"/>
    <property type="match status" value="1"/>
</dbReference>
<dbReference type="Pfam" id="PF00762">
    <property type="entry name" value="Ferrochelatase"/>
    <property type="match status" value="1"/>
</dbReference>
<dbReference type="SUPFAM" id="SSF53800">
    <property type="entry name" value="Chelatase"/>
    <property type="match status" value="1"/>
</dbReference>
<dbReference type="PROSITE" id="PS00534">
    <property type="entry name" value="FERROCHELATASE"/>
    <property type="match status" value="1"/>
</dbReference>
<gene>
    <name evidence="1" type="primary">hemH</name>
    <name type="ordered locus">LBL_4018</name>
</gene>
<sequence length="366" mass="41594">MKNRILLINLGGPRDTSEIEKFLIDLFEDPLVFDLPLPEWIRKPLGKWVAKKRAPKVAQTYKSMGFGGGSPLVSETSKQANAIAKALEKITGEKWEGNITMTCGYPDIRKLNRDFLVPTKQNILLPLYPHFSRSTVLSTAKLVEQTTKFCPVSYEGWVAPFHSSQVYLESIRDLILDFFQNRLNRKDFLHSDSFQGVSNWETIDLIFSAHGIPIRLIEKGDRYREEINSNVENLKRLLYEKGFRGKCHTSFQSRVGPSKWTEPNTITMLEQLGKNGVKRVAVYPISFVSDHLETLEEIGEQLKKIAYNNGIAEYHRIPAPGIYPKFIEAMAKIGLESIQSSKNECICKKLGGHFPNLKSGECPINF</sequence>
<name>HEMH_LEPBL</name>
<proteinExistence type="inferred from homology"/>
<protein>
    <recommendedName>
        <fullName evidence="1">Ferrochelatase</fullName>
        <ecNumber evidence="1">4.98.1.1</ecNumber>
    </recommendedName>
    <alternativeName>
        <fullName evidence="1">Heme synthase</fullName>
    </alternativeName>
    <alternativeName>
        <fullName evidence="1">Protoheme ferro-lyase</fullName>
    </alternativeName>
</protein>
<accession>Q04X34</accession>
<keyword id="KW-0963">Cytoplasm</keyword>
<keyword id="KW-0350">Heme biosynthesis</keyword>
<keyword id="KW-0408">Iron</keyword>
<keyword id="KW-0456">Lyase</keyword>
<keyword id="KW-0479">Metal-binding</keyword>
<keyword id="KW-0627">Porphyrin biosynthesis</keyword>
<reference key="1">
    <citation type="journal article" date="2006" name="Proc. Natl. Acad. Sci. U.S.A.">
        <title>Genome reduction in Leptospira borgpetersenii reflects limited transmission potential.</title>
        <authorList>
            <person name="Bulach D.M."/>
            <person name="Zuerner R.L."/>
            <person name="Wilson P."/>
            <person name="Seemann T."/>
            <person name="McGrath A."/>
            <person name="Cullen P.A."/>
            <person name="Davis J."/>
            <person name="Johnson M."/>
            <person name="Kuczek E."/>
            <person name="Alt D.P."/>
            <person name="Peterson-Burch B."/>
            <person name="Coppel R.L."/>
            <person name="Rood J.I."/>
            <person name="Davies J.K."/>
            <person name="Adler B."/>
        </authorList>
    </citation>
    <scope>NUCLEOTIDE SEQUENCE [LARGE SCALE GENOMIC DNA]</scope>
    <source>
        <strain>L550</strain>
    </source>
</reference>
<organism>
    <name type="scientific">Leptospira borgpetersenii serovar Hardjo-bovis (strain L550)</name>
    <dbReference type="NCBI Taxonomy" id="355276"/>
    <lineage>
        <taxon>Bacteria</taxon>
        <taxon>Pseudomonadati</taxon>
        <taxon>Spirochaetota</taxon>
        <taxon>Spirochaetia</taxon>
        <taxon>Leptospirales</taxon>
        <taxon>Leptospiraceae</taxon>
        <taxon>Leptospira</taxon>
    </lineage>
</organism>